<protein>
    <recommendedName>
        <fullName evidence="1">Nucleotide-binding protein Asuc_0930</fullName>
    </recommendedName>
</protein>
<feature type="chain" id="PRO_1000072674" description="Nucleotide-binding protein Asuc_0930">
    <location>
        <begin position="1"/>
        <end position="287"/>
    </location>
</feature>
<feature type="binding site" evidence="1">
    <location>
        <begin position="8"/>
        <end position="15"/>
    </location>
    <ligand>
        <name>ATP</name>
        <dbReference type="ChEBI" id="CHEBI:30616"/>
    </ligand>
</feature>
<feature type="binding site" evidence="1">
    <location>
        <begin position="56"/>
        <end position="59"/>
    </location>
    <ligand>
        <name>GTP</name>
        <dbReference type="ChEBI" id="CHEBI:37565"/>
    </ligand>
</feature>
<comment type="function">
    <text evidence="1">Displays ATPase and GTPase activities.</text>
</comment>
<comment type="similarity">
    <text evidence="1">Belongs to the RapZ-like family.</text>
</comment>
<sequence length="287" mass="32777">MELIIISGRSGAGKSVALRALEDIGYYCVDNLPIDLLPQLADILSQSQASAAISLDIRNLPNSSQHLDEILTELENKHQIKIIFLDADRSTLIRRYSDSRRLHPLSVQNQDLSLEAAIDAEQIQLDPLIQHANLIIDTAVLSTHELAERLREFLRGNSDKELKIVVESFGFKYGLPLDADYVFDVRFLPNPHWNPSLRPMTGLEQPVIDFLSKYEDVANFIYTTRNYIETWLPMLERNNRSYLTIAIGCTGGKHRSVYIAQQLGEYFQDKGKHVKIQHKSLEKHKNR</sequence>
<keyword id="KW-0067">ATP-binding</keyword>
<keyword id="KW-0342">GTP-binding</keyword>
<keyword id="KW-0547">Nucleotide-binding</keyword>
<keyword id="KW-1185">Reference proteome</keyword>
<reference key="1">
    <citation type="journal article" date="2010" name="BMC Genomics">
        <title>A genomic perspective on the potential of Actinobacillus succinogenes for industrial succinate production.</title>
        <authorList>
            <person name="McKinlay J.B."/>
            <person name="Laivenieks M."/>
            <person name="Schindler B.D."/>
            <person name="McKinlay A.A."/>
            <person name="Siddaramappa S."/>
            <person name="Challacombe J.F."/>
            <person name="Lowry S.R."/>
            <person name="Clum A."/>
            <person name="Lapidus A.L."/>
            <person name="Burkhart K.B."/>
            <person name="Harkins V."/>
            <person name="Vieille C."/>
        </authorList>
    </citation>
    <scope>NUCLEOTIDE SEQUENCE [LARGE SCALE GENOMIC DNA]</scope>
    <source>
        <strain>ATCC 55618 / DSM 22257 / CCUG 43843 / 130Z</strain>
    </source>
</reference>
<name>Y930_ACTSZ</name>
<organism>
    <name type="scientific">Actinobacillus succinogenes (strain ATCC 55618 / DSM 22257 / CCUG 43843 / 130Z)</name>
    <dbReference type="NCBI Taxonomy" id="339671"/>
    <lineage>
        <taxon>Bacteria</taxon>
        <taxon>Pseudomonadati</taxon>
        <taxon>Pseudomonadota</taxon>
        <taxon>Gammaproteobacteria</taxon>
        <taxon>Pasteurellales</taxon>
        <taxon>Pasteurellaceae</taxon>
        <taxon>Actinobacillus</taxon>
    </lineage>
</organism>
<gene>
    <name type="ordered locus">Asuc_0930</name>
</gene>
<accession>A6VMV1</accession>
<evidence type="ECO:0000255" key="1">
    <source>
        <dbReference type="HAMAP-Rule" id="MF_00636"/>
    </source>
</evidence>
<dbReference type="EMBL" id="CP000746">
    <property type="protein sequence ID" value="ABR74298.1"/>
    <property type="molecule type" value="Genomic_DNA"/>
</dbReference>
<dbReference type="RefSeq" id="WP_012072675.1">
    <property type="nucleotide sequence ID" value="NC_009655.1"/>
</dbReference>
<dbReference type="SMR" id="A6VMV1"/>
<dbReference type="STRING" id="339671.Asuc_0930"/>
<dbReference type="KEGG" id="asu:Asuc_0930"/>
<dbReference type="eggNOG" id="COG1660">
    <property type="taxonomic scope" value="Bacteria"/>
</dbReference>
<dbReference type="HOGENOM" id="CLU_059558_1_1_6"/>
<dbReference type="OrthoDB" id="9784461at2"/>
<dbReference type="Proteomes" id="UP000001114">
    <property type="component" value="Chromosome"/>
</dbReference>
<dbReference type="GO" id="GO:0005524">
    <property type="term" value="F:ATP binding"/>
    <property type="evidence" value="ECO:0007669"/>
    <property type="project" value="UniProtKB-UniRule"/>
</dbReference>
<dbReference type="GO" id="GO:0005525">
    <property type="term" value="F:GTP binding"/>
    <property type="evidence" value="ECO:0007669"/>
    <property type="project" value="UniProtKB-UniRule"/>
</dbReference>
<dbReference type="Gene3D" id="3.40.50.300">
    <property type="entry name" value="P-loop containing nucleotide triphosphate hydrolases"/>
    <property type="match status" value="1"/>
</dbReference>
<dbReference type="HAMAP" id="MF_00636">
    <property type="entry name" value="RapZ_like"/>
    <property type="match status" value="1"/>
</dbReference>
<dbReference type="InterPro" id="IPR027417">
    <property type="entry name" value="P-loop_NTPase"/>
</dbReference>
<dbReference type="InterPro" id="IPR005337">
    <property type="entry name" value="RapZ-like"/>
</dbReference>
<dbReference type="InterPro" id="IPR053930">
    <property type="entry name" value="RapZ-like_N"/>
</dbReference>
<dbReference type="InterPro" id="IPR053931">
    <property type="entry name" value="RapZ_C"/>
</dbReference>
<dbReference type="NCBIfam" id="NF003828">
    <property type="entry name" value="PRK05416.1"/>
    <property type="match status" value="1"/>
</dbReference>
<dbReference type="PANTHER" id="PTHR30448">
    <property type="entry name" value="RNASE ADAPTER PROTEIN RAPZ"/>
    <property type="match status" value="1"/>
</dbReference>
<dbReference type="PANTHER" id="PTHR30448:SF0">
    <property type="entry name" value="RNASE ADAPTER PROTEIN RAPZ"/>
    <property type="match status" value="1"/>
</dbReference>
<dbReference type="Pfam" id="PF22740">
    <property type="entry name" value="PapZ_C"/>
    <property type="match status" value="1"/>
</dbReference>
<dbReference type="Pfam" id="PF03668">
    <property type="entry name" value="RapZ-like_N"/>
    <property type="match status" value="1"/>
</dbReference>
<dbReference type="PIRSF" id="PIRSF005052">
    <property type="entry name" value="P-loopkin"/>
    <property type="match status" value="1"/>
</dbReference>
<dbReference type="SUPFAM" id="SSF52540">
    <property type="entry name" value="P-loop containing nucleoside triphosphate hydrolases"/>
    <property type="match status" value="1"/>
</dbReference>
<proteinExistence type="inferred from homology"/>